<proteinExistence type="evidence at protein level"/>
<name>CNR2_RAT</name>
<gene>
    <name type="primary">Cnr2</name>
</gene>
<keyword id="KW-0025">Alternative splicing</keyword>
<keyword id="KW-1003">Cell membrane</keyword>
<keyword id="KW-0966">Cell projection</keyword>
<keyword id="KW-0297">G-protein coupled receptor</keyword>
<keyword id="KW-0325">Glycoprotein</keyword>
<keyword id="KW-0395">Inflammatory response</keyword>
<keyword id="KW-0472">Membrane</keyword>
<keyword id="KW-0597">Phosphoprotein</keyword>
<keyword id="KW-0675">Receptor</keyword>
<keyword id="KW-1185">Reference proteome</keyword>
<keyword id="KW-0807">Transducer</keyword>
<keyword id="KW-0812">Transmembrane</keyword>
<keyword id="KW-1133">Transmembrane helix</keyword>
<dbReference type="EMBL" id="AF176350">
    <property type="protein sequence ID" value="AAF08535.1"/>
    <property type="molecule type" value="Genomic_DNA"/>
</dbReference>
<dbReference type="EMBL" id="AF218846">
    <property type="protein sequence ID" value="AAG09710.1"/>
    <property type="molecule type" value="mRNA"/>
</dbReference>
<dbReference type="EMBL" id="AF286721">
    <property type="protein sequence ID" value="AAG22010.1"/>
    <property type="molecule type" value="Genomic_DNA"/>
</dbReference>
<dbReference type="EMBL" id="AF286722">
    <property type="protein sequence ID" value="AAG22011.1"/>
    <property type="molecule type" value="Genomic_DNA"/>
</dbReference>
<dbReference type="RefSeq" id="NP_001157614.1">
    <molecule id="Q9QZN9-1"/>
    <property type="nucleotide sequence ID" value="NM_001164142.4"/>
</dbReference>
<dbReference type="RefSeq" id="NP_001157615.1">
    <molecule id="Q9QZN9-1"/>
    <property type="nucleotide sequence ID" value="NM_001164143.3"/>
</dbReference>
<dbReference type="RefSeq" id="NP_001416630.1">
    <molecule id="Q9QZN9-1"/>
    <property type="nucleotide sequence ID" value="NM_001429701.1"/>
</dbReference>
<dbReference type="RefSeq" id="XP_038966618.1">
    <molecule id="Q9QZN9-2"/>
    <property type="nucleotide sequence ID" value="XM_039110690.2"/>
</dbReference>
<dbReference type="RefSeq" id="XP_063144400.1">
    <molecule id="Q9QZN9-1"/>
    <property type="nucleotide sequence ID" value="XM_063288330.1"/>
</dbReference>
<dbReference type="SMR" id="Q9QZN9"/>
<dbReference type="FunCoup" id="Q9QZN9">
    <property type="interactions" value="82"/>
</dbReference>
<dbReference type="IntAct" id="Q9QZN9">
    <property type="interactions" value="1"/>
</dbReference>
<dbReference type="STRING" id="10116.ENSRNOP00000012342"/>
<dbReference type="BindingDB" id="Q9QZN9"/>
<dbReference type="ChEMBL" id="CHEMBL2470"/>
<dbReference type="DrugCentral" id="Q9QZN9"/>
<dbReference type="GuidetoPHARMACOLOGY" id="57"/>
<dbReference type="GlyCosmos" id="Q9QZN9">
    <property type="glycosylation" value="1 site, No reported glycans"/>
</dbReference>
<dbReference type="GlyGen" id="Q9QZN9">
    <property type="glycosylation" value="1 site"/>
</dbReference>
<dbReference type="PhosphoSitePlus" id="Q9QZN9"/>
<dbReference type="PaxDb" id="10116-ENSRNOP00000012342"/>
<dbReference type="Ensembl" id="ENSRNOT00000012342.5">
    <molecule id="Q9QZN9-2"/>
    <property type="protein sequence ID" value="ENSRNOP00000012342.2"/>
    <property type="gene ID" value="ENSRNOG00000009260.6"/>
</dbReference>
<dbReference type="Ensembl" id="ENSRNOT00000074998.3">
    <molecule id="Q9QZN9-1"/>
    <property type="protein sequence ID" value="ENSRNOP00000066697.1"/>
    <property type="gene ID" value="ENSRNOG00000009260.6"/>
</dbReference>
<dbReference type="Ensembl" id="ENSRNOT00000114527.1">
    <molecule id="Q9QZN9-1"/>
    <property type="protein sequence ID" value="ENSRNOP00000078684.1"/>
    <property type="gene ID" value="ENSRNOG00000009260.6"/>
</dbReference>
<dbReference type="Ensembl" id="ENSRNOT00000119033.1">
    <molecule id="Q9QZN9-1"/>
    <property type="protein sequence ID" value="ENSRNOP00000088855.1"/>
    <property type="gene ID" value="ENSRNOG00000009260.6"/>
</dbReference>
<dbReference type="GeneID" id="57302"/>
<dbReference type="KEGG" id="rno:57302"/>
<dbReference type="UCSC" id="RGD:619713">
    <molecule id="Q9QZN9-1"/>
    <property type="organism name" value="rat"/>
</dbReference>
<dbReference type="AGR" id="RGD:619713"/>
<dbReference type="CTD" id="1269"/>
<dbReference type="RGD" id="619713">
    <property type="gene designation" value="Cnr2"/>
</dbReference>
<dbReference type="eggNOG" id="KOG3656">
    <property type="taxonomic scope" value="Eukaryota"/>
</dbReference>
<dbReference type="GeneTree" id="ENSGT01120000271819"/>
<dbReference type="HOGENOM" id="CLU_009579_7_0_1"/>
<dbReference type="InParanoid" id="Q9QZN9"/>
<dbReference type="OMA" id="AFDRYIC"/>
<dbReference type="PhylomeDB" id="Q9QZN9"/>
<dbReference type="TreeFam" id="TF330052"/>
<dbReference type="Reactome" id="R-RNO-373076">
    <property type="pathway name" value="Class A/1 (Rhodopsin-like receptors)"/>
</dbReference>
<dbReference type="Reactome" id="R-RNO-418594">
    <property type="pathway name" value="G alpha (i) signalling events"/>
</dbReference>
<dbReference type="PRO" id="PR:Q9QZN9"/>
<dbReference type="Proteomes" id="UP000002494">
    <property type="component" value="Chromosome 5"/>
</dbReference>
<dbReference type="Bgee" id="ENSRNOG00000009260">
    <property type="expression patterns" value="Expressed in spleen and 16 other cell types or tissues"/>
</dbReference>
<dbReference type="ExpressionAtlas" id="Q9QZN9">
    <property type="expression patterns" value="baseline and differential"/>
</dbReference>
<dbReference type="GO" id="GO:0005737">
    <property type="term" value="C:cytoplasm"/>
    <property type="evidence" value="ECO:0000318"/>
    <property type="project" value="GO_Central"/>
</dbReference>
<dbReference type="GO" id="GO:0030425">
    <property type="term" value="C:dendrite"/>
    <property type="evidence" value="ECO:0000314"/>
    <property type="project" value="RGD"/>
</dbReference>
<dbReference type="GO" id="GO:0005783">
    <property type="term" value="C:endoplasmic reticulum"/>
    <property type="evidence" value="ECO:0000266"/>
    <property type="project" value="RGD"/>
</dbReference>
<dbReference type="GO" id="GO:0031234">
    <property type="term" value="C:extrinsic component of cytoplasmic side of plasma membrane"/>
    <property type="evidence" value="ECO:0000314"/>
    <property type="project" value="RGD"/>
</dbReference>
<dbReference type="GO" id="GO:0043025">
    <property type="term" value="C:neuronal cell body"/>
    <property type="evidence" value="ECO:0000314"/>
    <property type="project" value="RGD"/>
</dbReference>
<dbReference type="GO" id="GO:0043204">
    <property type="term" value="C:perikaryon"/>
    <property type="evidence" value="ECO:0007669"/>
    <property type="project" value="UniProtKB-SubCell"/>
</dbReference>
<dbReference type="GO" id="GO:0005886">
    <property type="term" value="C:plasma membrane"/>
    <property type="evidence" value="ECO:0000318"/>
    <property type="project" value="GO_Central"/>
</dbReference>
<dbReference type="GO" id="GO:0045211">
    <property type="term" value="C:postsynaptic membrane"/>
    <property type="evidence" value="ECO:0000314"/>
    <property type="project" value="SynGO"/>
</dbReference>
<dbReference type="GO" id="GO:0004949">
    <property type="term" value="F:cannabinoid receptor activity"/>
    <property type="evidence" value="ECO:0000314"/>
    <property type="project" value="RGD"/>
</dbReference>
<dbReference type="GO" id="GO:0004930">
    <property type="term" value="F:G protein-coupled receptor activity"/>
    <property type="evidence" value="ECO:0000314"/>
    <property type="project" value="RGD"/>
</dbReference>
<dbReference type="GO" id="GO:0007189">
    <property type="term" value="P:adenylate cyclase-activating G protein-coupled receptor signaling pathway"/>
    <property type="evidence" value="ECO:0000318"/>
    <property type="project" value="GO_Central"/>
</dbReference>
<dbReference type="GO" id="GO:0007186">
    <property type="term" value="P:G protein-coupled receptor signaling pathway"/>
    <property type="evidence" value="ECO:0000314"/>
    <property type="project" value="RGD"/>
</dbReference>
<dbReference type="GO" id="GO:0006954">
    <property type="term" value="P:inflammatory response"/>
    <property type="evidence" value="ECO:0007669"/>
    <property type="project" value="UniProtKB-KW"/>
</dbReference>
<dbReference type="GO" id="GO:0030595">
    <property type="term" value="P:leukocyte chemotaxis"/>
    <property type="evidence" value="ECO:0000266"/>
    <property type="project" value="RGD"/>
</dbReference>
<dbReference type="GO" id="GO:0045759">
    <property type="term" value="P:negative regulation of action potential"/>
    <property type="evidence" value="ECO:0000315"/>
    <property type="project" value="RGD"/>
</dbReference>
<dbReference type="GO" id="GO:0033004">
    <property type="term" value="P:negative regulation of mast cell activation"/>
    <property type="evidence" value="ECO:0000314"/>
    <property type="project" value="RGD"/>
</dbReference>
<dbReference type="GO" id="GO:0032229">
    <property type="term" value="P:negative regulation of synaptic transmission, GABAergic"/>
    <property type="evidence" value="ECO:0000315"/>
    <property type="project" value="RGD"/>
</dbReference>
<dbReference type="GO" id="GO:0019222">
    <property type="term" value="P:regulation of metabolic process"/>
    <property type="evidence" value="ECO:0000318"/>
    <property type="project" value="GO_Central"/>
</dbReference>
<dbReference type="GO" id="GO:0001975">
    <property type="term" value="P:response to amphetamine"/>
    <property type="evidence" value="ECO:0000270"/>
    <property type="project" value="RGD"/>
</dbReference>
<dbReference type="GO" id="GO:0032496">
    <property type="term" value="P:response to lipopolysaccharide"/>
    <property type="evidence" value="ECO:0000315"/>
    <property type="project" value="RGD"/>
</dbReference>
<dbReference type="GO" id="GO:0099553">
    <property type="term" value="P:trans-synaptic signaling by endocannabinoid, modulating synaptic transmission"/>
    <property type="evidence" value="ECO:0000266"/>
    <property type="project" value="RGD"/>
</dbReference>
<dbReference type="CDD" id="cd15341">
    <property type="entry name" value="7tmA_CB2"/>
    <property type="match status" value="1"/>
</dbReference>
<dbReference type="FunFam" id="1.20.1070.10:FF:000072">
    <property type="entry name" value="Cannabinoid receptor 1"/>
    <property type="match status" value="1"/>
</dbReference>
<dbReference type="Gene3D" id="1.20.1070.10">
    <property type="entry name" value="Rhodopsin 7-helix transmembrane proteins"/>
    <property type="match status" value="1"/>
</dbReference>
<dbReference type="InterPro" id="IPR001551">
    <property type="entry name" value="Canbinoid_rcpt_2"/>
</dbReference>
<dbReference type="InterPro" id="IPR002230">
    <property type="entry name" value="Cnbnoid_rcpt"/>
</dbReference>
<dbReference type="InterPro" id="IPR000276">
    <property type="entry name" value="GPCR_Rhodpsn"/>
</dbReference>
<dbReference type="InterPro" id="IPR017452">
    <property type="entry name" value="GPCR_Rhodpsn_7TM"/>
</dbReference>
<dbReference type="PANTHER" id="PTHR22750">
    <property type="entry name" value="G-PROTEIN COUPLED RECEPTOR"/>
    <property type="match status" value="1"/>
</dbReference>
<dbReference type="Pfam" id="PF00001">
    <property type="entry name" value="7tm_1"/>
    <property type="match status" value="1"/>
</dbReference>
<dbReference type="PRINTS" id="PR00523">
    <property type="entry name" value="CANABINOID2R"/>
</dbReference>
<dbReference type="PRINTS" id="PR00362">
    <property type="entry name" value="CANNABINOIDR"/>
</dbReference>
<dbReference type="PRINTS" id="PR00237">
    <property type="entry name" value="GPCRRHODOPSN"/>
</dbReference>
<dbReference type="SMART" id="SM01381">
    <property type="entry name" value="7TM_GPCR_Srsx"/>
    <property type="match status" value="1"/>
</dbReference>
<dbReference type="SUPFAM" id="SSF81321">
    <property type="entry name" value="Family A G protein-coupled receptor-like"/>
    <property type="match status" value="1"/>
</dbReference>
<dbReference type="PROSITE" id="PS00237">
    <property type="entry name" value="G_PROTEIN_RECEP_F1_1"/>
    <property type="match status" value="1"/>
</dbReference>
<dbReference type="PROSITE" id="PS50262">
    <property type="entry name" value="G_PROTEIN_RECEP_F1_2"/>
    <property type="match status" value="1"/>
</dbReference>
<organism>
    <name type="scientific">Rattus norvegicus</name>
    <name type="common">Rat</name>
    <dbReference type="NCBI Taxonomy" id="10116"/>
    <lineage>
        <taxon>Eukaryota</taxon>
        <taxon>Metazoa</taxon>
        <taxon>Chordata</taxon>
        <taxon>Craniata</taxon>
        <taxon>Vertebrata</taxon>
        <taxon>Euteleostomi</taxon>
        <taxon>Mammalia</taxon>
        <taxon>Eutheria</taxon>
        <taxon>Euarchontoglires</taxon>
        <taxon>Glires</taxon>
        <taxon>Rodentia</taxon>
        <taxon>Myomorpha</taxon>
        <taxon>Muroidea</taxon>
        <taxon>Muridae</taxon>
        <taxon>Murinae</taxon>
        <taxon>Rattus</taxon>
    </lineage>
</organism>
<evidence type="ECO:0000250" key="1"/>
<evidence type="ECO:0000250" key="2">
    <source>
        <dbReference type="UniProtKB" id="P34972"/>
    </source>
</evidence>
<evidence type="ECO:0000250" key="3">
    <source>
        <dbReference type="UniProtKB" id="P47936"/>
    </source>
</evidence>
<evidence type="ECO:0000255" key="4"/>
<evidence type="ECO:0000255" key="5">
    <source>
        <dbReference type="PROSITE-ProRule" id="PRU00521"/>
    </source>
</evidence>
<evidence type="ECO:0000256" key="6">
    <source>
        <dbReference type="SAM" id="MobiDB-lite"/>
    </source>
</evidence>
<evidence type="ECO:0000269" key="7">
    <source>
    </source>
</evidence>
<evidence type="ECO:0000269" key="8">
    <source>
    </source>
</evidence>
<evidence type="ECO:0000269" key="9">
    <source>
    </source>
</evidence>
<evidence type="ECO:0000269" key="10">
    <source>
    </source>
</evidence>
<evidence type="ECO:0000303" key="11">
    <source>
    </source>
</evidence>
<evidence type="ECO:0000305" key="12"/>
<accession>Q9QZN9</accession>
<accession>Q9EP74</accession>
<feature type="chain" id="PRO_0000069325" description="Cannabinoid receptor 2">
    <location>
        <begin position="1"/>
        <end position="360"/>
    </location>
</feature>
<feature type="topological domain" description="Extracellular" evidence="4">
    <location>
        <begin position="1"/>
        <end position="33"/>
    </location>
</feature>
<feature type="transmembrane region" description="Helical; Name=1" evidence="4">
    <location>
        <begin position="34"/>
        <end position="59"/>
    </location>
</feature>
<feature type="topological domain" description="Cytoplasmic" evidence="4">
    <location>
        <begin position="60"/>
        <end position="71"/>
    </location>
</feature>
<feature type="transmembrane region" description="Helical; Name=2" evidence="4">
    <location>
        <begin position="72"/>
        <end position="92"/>
    </location>
</feature>
<feature type="topological domain" description="Extracellular" evidence="4">
    <location>
        <begin position="93"/>
        <end position="104"/>
    </location>
</feature>
<feature type="transmembrane region" description="Helical; Name=3" evidence="4">
    <location>
        <begin position="105"/>
        <end position="129"/>
    </location>
</feature>
<feature type="topological domain" description="Cytoplasmic" evidence="4">
    <location>
        <begin position="130"/>
        <end position="149"/>
    </location>
</feature>
<feature type="transmembrane region" description="Helical; Name=4" evidence="4">
    <location>
        <begin position="150"/>
        <end position="172"/>
    </location>
</feature>
<feature type="topological domain" description="Extracellular" evidence="4">
    <location>
        <begin position="173"/>
        <end position="188"/>
    </location>
</feature>
<feature type="transmembrane region" description="Helical; Name=5" evidence="4">
    <location>
        <begin position="189"/>
        <end position="214"/>
    </location>
</feature>
<feature type="topological domain" description="Cytoplasmic" evidence="4">
    <location>
        <begin position="215"/>
        <end position="246"/>
    </location>
</feature>
<feature type="transmembrane region" description="Helical; Name=6" evidence="4">
    <location>
        <begin position="247"/>
        <end position="267"/>
    </location>
</feature>
<feature type="topological domain" description="Extracellular" evidence="4">
    <location>
        <begin position="268"/>
        <end position="279"/>
    </location>
</feature>
<feature type="transmembrane region" description="Helical; Name=7" evidence="4">
    <location>
        <begin position="280"/>
        <end position="301"/>
    </location>
</feature>
<feature type="topological domain" description="Cytoplasmic" evidence="4">
    <location>
        <begin position="302"/>
        <end position="360"/>
    </location>
</feature>
<feature type="region of interest" description="Disordered" evidence="6">
    <location>
        <begin position="327"/>
        <end position="360"/>
    </location>
</feature>
<feature type="compositionally biased region" description="Polar residues" evidence="6">
    <location>
        <begin position="349"/>
        <end position="360"/>
    </location>
</feature>
<feature type="modified residue" description="Phosphoserine" evidence="3">
    <location>
        <position position="335"/>
    </location>
</feature>
<feature type="modified residue" description="Phosphoserine" evidence="3">
    <location>
        <position position="336"/>
    </location>
</feature>
<feature type="modified residue" description="Phosphothreonine" evidence="3">
    <location>
        <position position="338"/>
    </location>
</feature>
<feature type="modified residue" description="Phosphoserine" evidence="2">
    <location>
        <position position="352"/>
    </location>
</feature>
<feature type="glycosylation site" description="N-linked (GlcNAc...) asparagine" evidence="4">
    <location>
        <position position="11"/>
    </location>
</feature>
<feature type="splice variant" id="VSP_036231" description="In isoform 2." evidence="11">
    <original>VKTTTGPGSRTPGCSNC</original>
    <variation>TLVLKDKQELGGDCLLRTSSIHSPMLSLADSANRQDVRPHCPEELTWWCSVRRPISLPNKAGQSTLL</variation>
    <location>
        <begin position="344"/>
        <end position="360"/>
    </location>
</feature>
<feature type="sequence conflict" description="In Ref. 2; AAG09710/AAG22010/AAG22011." evidence="12" ref="2">
    <original>A</original>
    <variation>T</variation>
    <location>
        <position position="224"/>
    </location>
</feature>
<reference key="1">
    <citation type="journal article" date="2000" name="J. Pharmacol. Exp. Ther.">
        <title>Cloning and pharmacological characterization of the rat CB2 cannabinoid receptor.</title>
        <authorList>
            <person name="Griffin G."/>
            <person name="Tao Q."/>
            <person name="Abood M.E."/>
        </authorList>
    </citation>
    <scope>NUCLEOTIDE SEQUENCE [GENOMIC DNA] (ISOFORM 1)</scope>
    <source>
        <strain>Sprague-Dawley</strain>
    </source>
</reference>
<reference key="2">
    <citation type="journal article" date="2002" name="Biochim. Biophys. Acta">
        <title>Cloning and molecular characterization of the rat CB2 cannabinoid receptor.</title>
        <authorList>
            <person name="Brown S.M."/>
            <person name="Wager-Miller J."/>
            <person name="Mackie K."/>
        </authorList>
    </citation>
    <scope>NUCLEOTIDE SEQUENCE [GENOMIC DNA / MRNA] (ISOFORM 2)</scope>
    <scope>TISSUE SPECIFICITY</scope>
    <source>
        <strain>Sprague-Dawley</strain>
    </source>
</reference>
<reference key="3">
    <citation type="journal article" date="2002" name="Eur. J. Biochem.">
        <title>Presence and regulation of the endocannabinoid system in human dendritic cells.</title>
        <authorList>
            <person name="Matias I."/>
            <person name="Pochard P."/>
            <person name="Orlando P."/>
            <person name="Salzet M."/>
            <person name="Pestel J."/>
            <person name="Di Marzo V."/>
        </authorList>
    </citation>
    <scope>TISSUE SPECIFICITY</scope>
</reference>
<reference key="4">
    <citation type="journal article" date="2005" name="Science">
        <title>Identification and functional characterization of brainstem cannabinoid CB2 receptors.</title>
        <authorList>
            <person name="Van Sickle M.D."/>
            <person name="Duncan M."/>
            <person name="Kingsley P.J."/>
            <person name="Mouihate A."/>
            <person name="Urbani P."/>
            <person name="Mackie K."/>
            <person name="Stella N."/>
            <person name="Makriyannis A."/>
            <person name="Piomelli D."/>
            <person name="Davison J.S."/>
            <person name="Marnett L.J."/>
            <person name="Di Marzo V."/>
            <person name="Pittman Q.J."/>
            <person name="Patel K.D."/>
            <person name="Sharkey K.A."/>
        </authorList>
    </citation>
    <scope>TISSUE SPECIFICITY</scope>
</reference>
<reference key="5">
    <citation type="journal article" date="2008" name="PLoS ONE">
        <title>Brain neuronal CB2 cannabinoid receptors in drug abuse and depression: from mice to human subjects.</title>
        <authorList>
            <person name="Onaivi E.S."/>
            <person name="Ishiguro H."/>
            <person name="Gong J.-P."/>
            <person name="Patel S."/>
            <person name="Meozzi P.A."/>
            <person name="Myers L."/>
            <person name="Perchuk A."/>
            <person name="Mora Z."/>
            <person name="Tagliaferro P.A."/>
            <person name="Gardner E."/>
            <person name="Brusco A."/>
            <person name="Akinshola B.E."/>
            <person name="Hope B."/>
            <person name="Lujilde J."/>
            <person name="Inada T."/>
            <person name="Iwasaki S."/>
            <person name="Macharia D."/>
            <person name="Teasenfitz L."/>
            <person name="Arinami T."/>
            <person name="Uhl G.R."/>
        </authorList>
    </citation>
    <scope>TISSUE SPECIFICITY</scope>
    <scope>SUBCELLULAR LOCATION</scope>
</reference>
<comment type="function">
    <text evidence="1">Heterotrimeric G protein-coupled receptor for endocannabinoid 2-arachidonoylglycerol mediating inhibition of adenylate cyclase. May function in inflammatory response, nociceptive transmission and bone homeostasis (By similarity).</text>
</comment>
<comment type="subcellular location">
    <subcellularLocation>
        <location evidence="10">Cell membrane</location>
        <topology evidence="10">Multi-pass membrane protein</topology>
    </subcellularLocation>
    <subcellularLocation>
        <location evidence="10">Cell projection</location>
        <location evidence="10">Dendrite</location>
    </subcellularLocation>
    <subcellularLocation>
        <location evidence="10">Perikaryon</location>
    </subcellularLocation>
    <text>Localizes to apical dendrite of pyramidal neurons.</text>
</comment>
<comment type="alternative products">
    <event type="alternative splicing"/>
    <isoform>
        <id>Q9QZN9-1</id>
        <name>1</name>
        <sequence type="displayed"/>
    </isoform>
    <isoform>
        <id>Q9QZN9-2</id>
        <name>2</name>
        <sequence type="described" ref="VSP_036231"/>
    </isoform>
</comment>
<comment type="tissue specificity">
    <text evidence="7 8 9 10">Expressed in spleen and brain by neurons and glial cells (at protein level). Expressed in lung, testis and thymus but not in heart, liver or kidney. Expressed in cerebellum, cortex and brainstem.</text>
</comment>
<comment type="PTM">
    <text evidence="1">Constitutively phosphorylated on Ser-352; phosphorylation increases cell internalization and desensitizes the receptor.</text>
</comment>
<comment type="similarity">
    <text evidence="5">Belongs to the G-protein coupled receptor 1 family.</text>
</comment>
<protein>
    <recommendedName>
        <fullName>Cannabinoid receptor 2</fullName>
        <shortName>CB-2</shortName>
        <shortName>CB2</shortName>
        <shortName>rCB2</shortName>
    </recommendedName>
</protein>
<sequence>MAGCRELELTNGSNGGLEFNPMKEYMILSDAQQIAVAVLCTLMGLLSALENVAVLYLILSSQRLRRKPSYLFIGSLAGADFLASVIFACNFVIFHVFHGVDSRNIFLLKIGSVTMTFTASVGSLLLTAVDRYLCLCYPPTYKALVTRGRALVALGVMWVLSALISYLPLMGWTCCPSPCSELFPLIPNDYLLGWLLFIAILFSGIIYTYGYVLWKAHQHVASLAEHQDRQVPGIARMRLDVRLAKTLGLVMAVLLICWFPALALMGHSLVTTLSDKVKEAFAFCSMLCLVNSMINPIIYALRSGEIRSAAQHCLTGWKKYLQGLGSEGKEEAPKSSVTETEAEVKTTTGPGSRTPGCSNC</sequence>